<proteinExistence type="evidence at transcript level"/>
<sequence>MSASRFIKCVTVGDGAVGKTCLLISYTSNTFPTDYVPTVFDNFSANVVVNGATVNLGLWDTAGQEDYNRLRPLSYRGADVFILAFSLISKASYENVSKKWIPELKHYAPGVPIVLVGTKLDLRDDKQFFIDHPGAVPITTAQGEELRKLIGAPAYIECSSKTQQNVKAVFDAAIKVVLQPPKTKKKKSKAQKACSIL</sequence>
<keyword id="KW-0963">Cytoplasm</keyword>
<keyword id="KW-0342">GTP-binding</keyword>
<keyword id="KW-0449">Lipoprotein</keyword>
<keyword id="KW-0472">Membrane</keyword>
<keyword id="KW-0488">Methylation</keyword>
<keyword id="KW-0547">Nucleotide-binding</keyword>
<keyword id="KW-0636">Prenylation</keyword>
<gene>
    <name type="primary">RHO1</name>
</gene>
<reference key="1">
    <citation type="journal article" date="1996" name="C. R. Acad. Sci. III, Sci. Vie">
        <title>Molecular cloning and structural analysis of cDNAs that encode 3 small GTP-binding proteins from sugar beet.</title>
        <authorList>
            <person name="Dallery E."/>
            <person name="Quief S."/>
            <person name="Ben-Jilany K.E."/>
            <person name="Kerckaert J.-P."/>
            <person name="Hagege D."/>
        </authorList>
    </citation>
    <scope>NUCLEOTIDE SEQUENCE [MRNA]</scope>
    <source>
        <strain>cv. D100 KS 38080</strain>
    </source>
</reference>
<protein>
    <recommendedName>
        <fullName>Rac-like GTP-binding protein RHO1</fullName>
    </recommendedName>
    <alternativeName>
        <fullName>RHO1Bv</fullName>
    </alternativeName>
</protein>
<organism>
    <name type="scientific">Beta vulgaris</name>
    <name type="common">Sugar beet</name>
    <dbReference type="NCBI Taxonomy" id="161934"/>
    <lineage>
        <taxon>Eukaryota</taxon>
        <taxon>Viridiplantae</taxon>
        <taxon>Streptophyta</taxon>
        <taxon>Embryophyta</taxon>
        <taxon>Tracheophyta</taxon>
        <taxon>Spermatophyta</taxon>
        <taxon>Magnoliopsida</taxon>
        <taxon>eudicotyledons</taxon>
        <taxon>Gunneridae</taxon>
        <taxon>Pentapetalae</taxon>
        <taxon>Caryophyllales</taxon>
        <taxon>Chenopodiaceae</taxon>
        <taxon>Betoideae</taxon>
        <taxon>Beta</taxon>
    </lineage>
</organism>
<dbReference type="EMBL" id="Z49191">
    <property type="protein sequence ID" value="CAA89050.1"/>
    <property type="molecule type" value="mRNA"/>
</dbReference>
<dbReference type="SMR" id="Q39435"/>
<dbReference type="KEGG" id="bvg:104895157"/>
<dbReference type="OMA" id="WVLEIRR"/>
<dbReference type="PhylomeDB" id="Q39435"/>
<dbReference type="GO" id="GO:0005737">
    <property type="term" value="C:cytoplasm"/>
    <property type="evidence" value="ECO:0007669"/>
    <property type="project" value="UniProtKB-SubCell"/>
</dbReference>
<dbReference type="GO" id="GO:0016020">
    <property type="term" value="C:membrane"/>
    <property type="evidence" value="ECO:0007669"/>
    <property type="project" value="UniProtKB-SubCell"/>
</dbReference>
<dbReference type="GO" id="GO:0005525">
    <property type="term" value="F:GTP binding"/>
    <property type="evidence" value="ECO:0007669"/>
    <property type="project" value="UniProtKB-KW"/>
</dbReference>
<dbReference type="GO" id="GO:0003924">
    <property type="term" value="F:GTPase activity"/>
    <property type="evidence" value="ECO:0007669"/>
    <property type="project" value="InterPro"/>
</dbReference>
<dbReference type="GO" id="GO:0007264">
    <property type="term" value="P:small GTPase-mediated signal transduction"/>
    <property type="evidence" value="ECO:0007669"/>
    <property type="project" value="InterPro"/>
</dbReference>
<dbReference type="CDD" id="cd04133">
    <property type="entry name" value="Rop_like"/>
    <property type="match status" value="1"/>
</dbReference>
<dbReference type="FunFam" id="3.40.50.300:FF:000336">
    <property type="entry name" value="rac-like GTP-binding protein RHO1"/>
    <property type="match status" value="1"/>
</dbReference>
<dbReference type="Gene3D" id="3.40.50.300">
    <property type="entry name" value="P-loop containing nucleotide triphosphate hydrolases"/>
    <property type="match status" value="1"/>
</dbReference>
<dbReference type="InterPro" id="IPR027417">
    <property type="entry name" value="P-loop_NTPase"/>
</dbReference>
<dbReference type="InterPro" id="IPR005225">
    <property type="entry name" value="Small_GTP-bd"/>
</dbReference>
<dbReference type="InterPro" id="IPR001806">
    <property type="entry name" value="Small_GTPase"/>
</dbReference>
<dbReference type="InterPro" id="IPR003578">
    <property type="entry name" value="Small_GTPase_Rho"/>
</dbReference>
<dbReference type="NCBIfam" id="TIGR00231">
    <property type="entry name" value="small_GTP"/>
    <property type="match status" value="1"/>
</dbReference>
<dbReference type="PANTHER" id="PTHR24072">
    <property type="entry name" value="RHO FAMILY GTPASE"/>
    <property type="match status" value="1"/>
</dbReference>
<dbReference type="Pfam" id="PF00071">
    <property type="entry name" value="Ras"/>
    <property type="match status" value="1"/>
</dbReference>
<dbReference type="PRINTS" id="PR00449">
    <property type="entry name" value="RASTRNSFRMNG"/>
</dbReference>
<dbReference type="SMART" id="SM00175">
    <property type="entry name" value="RAB"/>
    <property type="match status" value="1"/>
</dbReference>
<dbReference type="SMART" id="SM00176">
    <property type="entry name" value="RAN"/>
    <property type="match status" value="1"/>
</dbReference>
<dbReference type="SMART" id="SM00173">
    <property type="entry name" value="RAS"/>
    <property type="match status" value="1"/>
</dbReference>
<dbReference type="SMART" id="SM00174">
    <property type="entry name" value="RHO"/>
    <property type="match status" value="1"/>
</dbReference>
<dbReference type="SUPFAM" id="SSF52540">
    <property type="entry name" value="P-loop containing nucleoside triphosphate hydrolases"/>
    <property type="match status" value="1"/>
</dbReference>
<dbReference type="PROSITE" id="PS51420">
    <property type="entry name" value="RHO"/>
    <property type="match status" value="1"/>
</dbReference>
<evidence type="ECO:0000250" key="1"/>
<evidence type="ECO:0000255" key="2"/>
<evidence type="ECO:0000305" key="3"/>
<feature type="chain" id="PRO_0000198926" description="Rac-like GTP-binding protein RHO1">
    <location>
        <begin position="1"/>
        <end position="194"/>
    </location>
</feature>
<feature type="propeptide" id="PRO_0000227588" description="Removed in mature form" evidence="2">
    <location>
        <begin position="195"/>
        <end position="197"/>
    </location>
</feature>
<feature type="short sequence motif" description="Effector region" evidence="2">
    <location>
        <begin position="35"/>
        <end position="43"/>
    </location>
</feature>
<feature type="binding site" evidence="1">
    <location>
        <begin position="13"/>
        <end position="20"/>
    </location>
    <ligand>
        <name>GTP</name>
        <dbReference type="ChEBI" id="CHEBI:37565"/>
    </ligand>
</feature>
<feature type="binding site" evidence="1">
    <location>
        <begin position="60"/>
        <end position="64"/>
    </location>
    <ligand>
        <name>GTP</name>
        <dbReference type="ChEBI" id="CHEBI:37565"/>
    </ligand>
</feature>
<feature type="binding site" evidence="1">
    <location>
        <begin position="118"/>
        <end position="121"/>
    </location>
    <ligand>
        <name>GTP</name>
        <dbReference type="ChEBI" id="CHEBI:37565"/>
    </ligand>
</feature>
<feature type="modified residue" description="Cysteine methyl ester" evidence="2">
    <location>
        <position position="194"/>
    </location>
</feature>
<feature type="lipid moiety-binding region" description="S-geranylgeranyl cysteine" evidence="2">
    <location>
        <position position="194"/>
    </location>
</feature>
<name>RAC1_BETVU</name>
<accession>Q39435</accession>
<comment type="function">
    <text evidence="1">Inactive GDP-bound Rho GTPases reside in the cytosol, are found in a complex with Rho GDP-dissociation inhibitors (Rho GDIs), and are released from the GDI protein in order to translocate to membranes upon activation.</text>
</comment>
<comment type="subcellular location">
    <subcellularLocation>
        <location evidence="1">Cytoplasm</location>
    </subcellularLocation>
    <subcellularLocation>
        <location evidence="1">Membrane</location>
        <topology evidence="1">Peripheral membrane protein</topology>
    </subcellularLocation>
    <text>Associated with the membrane when activated.</text>
</comment>
<comment type="similarity">
    <text evidence="3">Belongs to the small GTPase superfamily. Rho family.</text>
</comment>